<proteinExistence type="inferred from homology"/>
<dbReference type="EC" id="2.7.7.8" evidence="1"/>
<dbReference type="EMBL" id="CP000002">
    <property type="protein sequence ID" value="AAU23429.1"/>
    <property type="molecule type" value="Genomic_DNA"/>
</dbReference>
<dbReference type="EMBL" id="AE017333">
    <property type="protein sequence ID" value="AAU40789.1"/>
    <property type="molecule type" value="Genomic_DNA"/>
</dbReference>
<dbReference type="RefSeq" id="WP_003181881.1">
    <property type="nucleotide sequence ID" value="NC_006322.1"/>
</dbReference>
<dbReference type="SMR" id="Q65JH5"/>
<dbReference type="STRING" id="279010.BL01217"/>
<dbReference type="GeneID" id="92861513"/>
<dbReference type="KEGG" id="bld:BLi01894"/>
<dbReference type="KEGG" id="bli:BL01217"/>
<dbReference type="eggNOG" id="COG1185">
    <property type="taxonomic scope" value="Bacteria"/>
</dbReference>
<dbReference type="HOGENOM" id="CLU_004217_2_2_9"/>
<dbReference type="Proteomes" id="UP000000606">
    <property type="component" value="Chromosome"/>
</dbReference>
<dbReference type="GO" id="GO:0005829">
    <property type="term" value="C:cytosol"/>
    <property type="evidence" value="ECO:0007669"/>
    <property type="project" value="TreeGrafter"/>
</dbReference>
<dbReference type="GO" id="GO:0000175">
    <property type="term" value="F:3'-5'-RNA exonuclease activity"/>
    <property type="evidence" value="ECO:0007669"/>
    <property type="project" value="TreeGrafter"/>
</dbReference>
<dbReference type="GO" id="GO:0000287">
    <property type="term" value="F:magnesium ion binding"/>
    <property type="evidence" value="ECO:0007669"/>
    <property type="project" value="UniProtKB-UniRule"/>
</dbReference>
<dbReference type="GO" id="GO:0004654">
    <property type="term" value="F:polyribonucleotide nucleotidyltransferase activity"/>
    <property type="evidence" value="ECO:0007669"/>
    <property type="project" value="UniProtKB-UniRule"/>
</dbReference>
<dbReference type="GO" id="GO:0003723">
    <property type="term" value="F:RNA binding"/>
    <property type="evidence" value="ECO:0007669"/>
    <property type="project" value="UniProtKB-UniRule"/>
</dbReference>
<dbReference type="GO" id="GO:0006402">
    <property type="term" value="P:mRNA catabolic process"/>
    <property type="evidence" value="ECO:0007669"/>
    <property type="project" value="UniProtKB-UniRule"/>
</dbReference>
<dbReference type="GO" id="GO:0006396">
    <property type="term" value="P:RNA processing"/>
    <property type="evidence" value="ECO:0007669"/>
    <property type="project" value="InterPro"/>
</dbReference>
<dbReference type="CDD" id="cd02393">
    <property type="entry name" value="KH-I_PNPase"/>
    <property type="match status" value="1"/>
</dbReference>
<dbReference type="CDD" id="cd11363">
    <property type="entry name" value="RNase_PH_PNPase_1"/>
    <property type="match status" value="1"/>
</dbReference>
<dbReference type="CDD" id="cd11364">
    <property type="entry name" value="RNase_PH_PNPase_2"/>
    <property type="match status" value="1"/>
</dbReference>
<dbReference type="CDD" id="cd04472">
    <property type="entry name" value="S1_PNPase"/>
    <property type="match status" value="1"/>
</dbReference>
<dbReference type="FunFam" id="2.40.50.140:FF:000023">
    <property type="entry name" value="Polyribonucleotide nucleotidyltransferase"/>
    <property type="match status" value="1"/>
</dbReference>
<dbReference type="FunFam" id="3.30.1370.10:FF:000001">
    <property type="entry name" value="Polyribonucleotide nucleotidyltransferase"/>
    <property type="match status" value="1"/>
</dbReference>
<dbReference type="FunFam" id="3.30.230.70:FF:000001">
    <property type="entry name" value="Polyribonucleotide nucleotidyltransferase"/>
    <property type="match status" value="1"/>
</dbReference>
<dbReference type="FunFam" id="3.30.230.70:FF:000002">
    <property type="entry name" value="Polyribonucleotide nucleotidyltransferase"/>
    <property type="match status" value="1"/>
</dbReference>
<dbReference type="Gene3D" id="3.30.230.70">
    <property type="entry name" value="GHMP Kinase, N-terminal domain"/>
    <property type="match status" value="2"/>
</dbReference>
<dbReference type="Gene3D" id="3.30.1370.10">
    <property type="entry name" value="K Homology domain, type 1"/>
    <property type="match status" value="1"/>
</dbReference>
<dbReference type="Gene3D" id="2.40.50.140">
    <property type="entry name" value="Nucleic acid-binding proteins"/>
    <property type="match status" value="1"/>
</dbReference>
<dbReference type="HAMAP" id="MF_01595">
    <property type="entry name" value="PNPase"/>
    <property type="match status" value="1"/>
</dbReference>
<dbReference type="InterPro" id="IPR001247">
    <property type="entry name" value="ExoRNase_PH_dom1"/>
</dbReference>
<dbReference type="InterPro" id="IPR015847">
    <property type="entry name" value="ExoRNase_PH_dom2"/>
</dbReference>
<dbReference type="InterPro" id="IPR036345">
    <property type="entry name" value="ExoRNase_PH_dom2_sf"/>
</dbReference>
<dbReference type="InterPro" id="IPR004087">
    <property type="entry name" value="KH_dom"/>
</dbReference>
<dbReference type="InterPro" id="IPR004088">
    <property type="entry name" value="KH_dom_type_1"/>
</dbReference>
<dbReference type="InterPro" id="IPR036612">
    <property type="entry name" value="KH_dom_type_1_sf"/>
</dbReference>
<dbReference type="InterPro" id="IPR012340">
    <property type="entry name" value="NA-bd_OB-fold"/>
</dbReference>
<dbReference type="InterPro" id="IPR012162">
    <property type="entry name" value="PNPase"/>
</dbReference>
<dbReference type="InterPro" id="IPR027408">
    <property type="entry name" value="PNPase/RNase_PH_dom_sf"/>
</dbReference>
<dbReference type="InterPro" id="IPR015848">
    <property type="entry name" value="PNPase_PH_RNA-bd_bac/org-type"/>
</dbReference>
<dbReference type="InterPro" id="IPR020568">
    <property type="entry name" value="Ribosomal_Su5_D2-typ_SF"/>
</dbReference>
<dbReference type="InterPro" id="IPR003029">
    <property type="entry name" value="S1_domain"/>
</dbReference>
<dbReference type="NCBIfam" id="TIGR03591">
    <property type="entry name" value="polynuc_phos"/>
    <property type="match status" value="1"/>
</dbReference>
<dbReference type="NCBIfam" id="NF008805">
    <property type="entry name" value="PRK11824.1"/>
    <property type="match status" value="1"/>
</dbReference>
<dbReference type="PANTHER" id="PTHR11252">
    <property type="entry name" value="POLYRIBONUCLEOTIDE NUCLEOTIDYLTRANSFERASE"/>
    <property type="match status" value="1"/>
</dbReference>
<dbReference type="PANTHER" id="PTHR11252:SF0">
    <property type="entry name" value="POLYRIBONUCLEOTIDE NUCLEOTIDYLTRANSFERASE 1, MITOCHONDRIAL"/>
    <property type="match status" value="1"/>
</dbReference>
<dbReference type="Pfam" id="PF00013">
    <property type="entry name" value="KH_1"/>
    <property type="match status" value="1"/>
</dbReference>
<dbReference type="Pfam" id="PF03726">
    <property type="entry name" value="PNPase"/>
    <property type="match status" value="1"/>
</dbReference>
<dbReference type="Pfam" id="PF01138">
    <property type="entry name" value="RNase_PH"/>
    <property type="match status" value="2"/>
</dbReference>
<dbReference type="Pfam" id="PF03725">
    <property type="entry name" value="RNase_PH_C"/>
    <property type="match status" value="2"/>
</dbReference>
<dbReference type="Pfam" id="PF00575">
    <property type="entry name" value="S1"/>
    <property type="match status" value="1"/>
</dbReference>
<dbReference type="PIRSF" id="PIRSF005499">
    <property type="entry name" value="PNPase"/>
    <property type="match status" value="1"/>
</dbReference>
<dbReference type="SMART" id="SM00322">
    <property type="entry name" value="KH"/>
    <property type="match status" value="1"/>
</dbReference>
<dbReference type="SMART" id="SM00316">
    <property type="entry name" value="S1"/>
    <property type="match status" value="1"/>
</dbReference>
<dbReference type="SUPFAM" id="SSF54791">
    <property type="entry name" value="Eukaryotic type KH-domain (KH-domain type I)"/>
    <property type="match status" value="1"/>
</dbReference>
<dbReference type="SUPFAM" id="SSF50249">
    <property type="entry name" value="Nucleic acid-binding proteins"/>
    <property type="match status" value="1"/>
</dbReference>
<dbReference type="SUPFAM" id="SSF55666">
    <property type="entry name" value="Ribonuclease PH domain 2-like"/>
    <property type="match status" value="2"/>
</dbReference>
<dbReference type="SUPFAM" id="SSF54211">
    <property type="entry name" value="Ribosomal protein S5 domain 2-like"/>
    <property type="match status" value="2"/>
</dbReference>
<dbReference type="PROSITE" id="PS50084">
    <property type="entry name" value="KH_TYPE_1"/>
    <property type="match status" value="1"/>
</dbReference>
<dbReference type="PROSITE" id="PS50126">
    <property type="entry name" value="S1"/>
    <property type="match status" value="1"/>
</dbReference>
<accession>Q65JH5</accession>
<accession>Q62UY0</accession>
<gene>
    <name evidence="1" type="primary">pnp</name>
    <name type="ordered locus">BLi01894</name>
    <name type="ordered locus">BL01217</name>
</gene>
<keyword id="KW-0963">Cytoplasm</keyword>
<keyword id="KW-0460">Magnesium</keyword>
<keyword id="KW-0479">Metal-binding</keyword>
<keyword id="KW-0548">Nucleotidyltransferase</keyword>
<keyword id="KW-1185">Reference proteome</keyword>
<keyword id="KW-0694">RNA-binding</keyword>
<keyword id="KW-0808">Transferase</keyword>
<reference key="1">
    <citation type="journal article" date="2004" name="J. Mol. Microbiol. Biotechnol.">
        <title>The complete genome sequence of Bacillus licheniformis DSM13, an organism with great industrial potential.</title>
        <authorList>
            <person name="Veith B."/>
            <person name="Herzberg C."/>
            <person name="Steckel S."/>
            <person name="Feesche J."/>
            <person name="Maurer K.H."/>
            <person name="Ehrenreich P."/>
            <person name="Baeumer S."/>
            <person name="Henne A."/>
            <person name="Liesegang H."/>
            <person name="Merkl R."/>
            <person name="Ehrenreich A."/>
            <person name="Gottschalk G."/>
        </authorList>
    </citation>
    <scope>NUCLEOTIDE SEQUENCE [LARGE SCALE GENOMIC DNA]</scope>
    <source>
        <strain>ATCC 14580 / DSM 13 / JCM 2505 / CCUG 7422 / NBRC 12200 / NCIMB 9375 / NCTC 10341 / NRRL NRS-1264 / Gibson 46</strain>
    </source>
</reference>
<reference key="2">
    <citation type="journal article" date="2004" name="Genome Biol.">
        <title>Complete genome sequence of the industrial bacterium Bacillus licheniformis and comparisons with closely related Bacillus species.</title>
        <authorList>
            <person name="Rey M.W."/>
            <person name="Ramaiya P."/>
            <person name="Nelson B.A."/>
            <person name="Brody-Karpin S.D."/>
            <person name="Zaretsky E.J."/>
            <person name="Tang M."/>
            <person name="Lopez de Leon A."/>
            <person name="Xiang H."/>
            <person name="Gusti V."/>
            <person name="Clausen I.G."/>
            <person name="Olsen P.B."/>
            <person name="Rasmussen M.D."/>
            <person name="Andersen J.T."/>
            <person name="Joergensen P.L."/>
            <person name="Larsen T.S."/>
            <person name="Sorokin A."/>
            <person name="Bolotin A."/>
            <person name="Lapidus A."/>
            <person name="Galleron N."/>
            <person name="Ehrlich S.D."/>
            <person name="Berka R.M."/>
        </authorList>
    </citation>
    <scope>NUCLEOTIDE SEQUENCE [LARGE SCALE GENOMIC DNA]</scope>
    <source>
        <strain>ATCC 14580 / DSM 13 / JCM 2505 / CCUG 7422 / NBRC 12200 / NCIMB 9375 / NCTC 10341 / NRRL NRS-1264 / Gibson 46</strain>
    </source>
</reference>
<comment type="function">
    <text evidence="1">Involved in mRNA degradation. Catalyzes the phosphorolysis of single-stranded polyribonucleotides processively in the 3'- to 5'-direction.</text>
</comment>
<comment type="catalytic activity">
    <reaction evidence="1">
        <text>RNA(n+1) + phosphate = RNA(n) + a ribonucleoside 5'-diphosphate</text>
        <dbReference type="Rhea" id="RHEA:22096"/>
        <dbReference type="Rhea" id="RHEA-COMP:14527"/>
        <dbReference type="Rhea" id="RHEA-COMP:17342"/>
        <dbReference type="ChEBI" id="CHEBI:43474"/>
        <dbReference type="ChEBI" id="CHEBI:57930"/>
        <dbReference type="ChEBI" id="CHEBI:140395"/>
        <dbReference type="EC" id="2.7.7.8"/>
    </reaction>
</comment>
<comment type="cofactor">
    <cofactor evidence="1">
        <name>Mg(2+)</name>
        <dbReference type="ChEBI" id="CHEBI:18420"/>
    </cofactor>
</comment>
<comment type="subcellular location">
    <subcellularLocation>
        <location evidence="1">Cytoplasm</location>
    </subcellularLocation>
</comment>
<comment type="similarity">
    <text evidence="1">Belongs to the polyribonucleotide nucleotidyltransferase family.</text>
</comment>
<feature type="chain" id="PRO_0000329518" description="Polyribonucleotide nucleotidyltransferase">
    <location>
        <begin position="1"/>
        <end position="705"/>
    </location>
</feature>
<feature type="domain" description="KH" evidence="1">
    <location>
        <begin position="554"/>
        <end position="613"/>
    </location>
</feature>
<feature type="domain" description="S1 motif" evidence="1">
    <location>
        <begin position="623"/>
        <end position="691"/>
    </location>
</feature>
<feature type="binding site" evidence="1">
    <location>
        <position position="487"/>
    </location>
    <ligand>
        <name>Mg(2+)</name>
        <dbReference type="ChEBI" id="CHEBI:18420"/>
    </ligand>
</feature>
<feature type="binding site" evidence="1">
    <location>
        <position position="493"/>
    </location>
    <ligand>
        <name>Mg(2+)</name>
        <dbReference type="ChEBI" id="CHEBI:18420"/>
    </ligand>
</feature>
<protein>
    <recommendedName>
        <fullName evidence="1">Polyribonucleotide nucleotidyltransferase</fullName>
        <ecNumber evidence="1">2.7.7.8</ecNumber>
    </recommendedName>
    <alternativeName>
        <fullName evidence="1">Polynucleotide phosphorylase</fullName>
        <shortName evidence="1">PNPase</shortName>
    </alternativeName>
</protein>
<organism>
    <name type="scientific">Bacillus licheniformis (strain ATCC 14580 / DSM 13 / JCM 2505 / CCUG 7422 / NBRC 12200 / NCIMB 9375 / NCTC 10341 / NRRL NRS-1264 / Gibson 46)</name>
    <dbReference type="NCBI Taxonomy" id="279010"/>
    <lineage>
        <taxon>Bacteria</taxon>
        <taxon>Bacillati</taxon>
        <taxon>Bacillota</taxon>
        <taxon>Bacilli</taxon>
        <taxon>Bacillales</taxon>
        <taxon>Bacillaceae</taxon>
        <taxon>Bacillus</taxon>
    </lineage>
</organism>
<sequence length="705" mass="77533">MGQEKHVFSIDWAGRKLTVETGQLAKQANGAVMVRYGDTAVLSTATASKEPKTVDFFPLTVNYEERLYAVGKIPGGFIKREGRPSEKAILASRLIDRPIRPLFADGFRNEVQVVSIVMSVDQDCSSEMAAMFGSSLALCVSDIPFEGPIAGVTVGRVDNKFIINPTLEQLEKSDIHLVVAGTKDAINMVEAGADEVPEEIMLEAIMFGHEEIKRLIAFQEEIVAAVGKEKSEITLYEIDSDLKEKVRGMAESNLLKAIQVHEKHAREDAISEVKNEVLAKFEEEEHDEETLKQVKDILSQLVKNEVRRLITEEKVRPDGRAVDEIRPLSSEVGLLPRTHGSGLFTRGQTQALSICTLGALGDVQILDGLGVEESKRFMHHYNFPQFSVGETGPMRGPGRREIGHGALGERALEPIVPSEKDFPYTIRLVSEVLESNGSTSQASICASTLAMMDAGVPIKAPVAGIAMGLVKSGDNYTVLTDIQGMEDHLGDMDFKVAGTSKGVTALQMDIKIEGLSREILEEALQQAKKGRMEILESMLSTLAESRKELSPYAPKILTMSINPDKIRDVIGPSGKQINKIIEDTGVKIDIEQDGTIFISSTDESMNQKAKKIIEDLVREVEVGQLYLGKVKRIEKFGAFVELFSGKDGLVHISELALERVGKVEDVVKIGDELLVKVTEIDKQGRVNLSRKAVLREQKEKEEQKS</sequence>
<name>PNP_BACLD</name>
<evidence type="ECO:0000255" key="1">
    <source>
        <dbReference type="HAMAP-Rule" id="MF_01595"/>
    </source>
</evidence>